<organism>
    <name type="scientific">Vipera ammodytes ammodytes</name>
    <name type="common">Western sand viper</name>
    <dbReference type="NCBI Taxonomy" id="8705"/>
    <lineage>
        <taxon>Eukaryota</taxon>
        <taxon>Metazoa</taxon>
        <taxon>Chordata</taxon>
        <taxon>Craniata</taxon>
        <taxon>Vertebrata</taxon>
        <taxon>Euteleostomi</taxon>
        <taxon>Lepidosauria</taxon>
        <taxon>Squamata</taxon>
        <taxon>Bifurcata</taxon>
        <taxon>Unidentata</taxon>
        <taxon>Episquamata</taxon>
        <taxon>Toxicofera</taxon>
        <taxon>Serpentes</taxon>
        <taxon>Colubroidea</taxon>
        <taxon>Viperidae</taxon>
        <taxon>Viperinae</taxon>
        <taxon>Vipera</taxon>
    </lineage>
</organism>
<sequence>LFDPPDSXPXY</sequence>
<accession>P0C8J3</accession>
<dbReference type="GO" id="GO:0005576">
    <property type="term" value="C:extracellular region"/>
    <property type="evidence" value="ECO:0007669"/>
    <property type="project" value="UniProtKB-SubCell"/>
</dbReference>
<dbReference type="GO" id="GO:0046872">
    <property type="term" value="F:metal ion binding"/>
    <property type="evidence" value="ECO:0007669"/>
    <property type="project" value="UniProtKB-KW"/>
</dbReference>
<dbReference type="GO" id="GO:0090729">
    <property type="term" value="F:toxin activity"/>
    <property type="evidence" value="ECO:0007669"/>
    <property type="project" value="UniProtKB-KW"/>
</dbReference>
<name>SL1C2_VIPAA</name>
<protein>
    <recommendedName>
        <fullName>Snaclec factor X-activator 1 light chain 2</fullName>
        <shortName>VAFXA-I LC2</shortName>
    </recommendedName>
</protein>
<gene>
    <name type="primary">LC2</name>
</gene>
<keyword id="KW-1204">Blood coagulation cascade activating toxin</keyword>
<keyword id="KW-0106">Calcium</keyword>
<keyword id="KW-0903">Direct protein sequencing</keyword>
<keyword id="KW-1015">Disulfide bond</keyword>
<keyword id="KW-0325">Glycoprotein</keyword>
<keyword id="KW-1199">Hemostasis impairing toxin</keyword>
<keyword id="KW-0479">Metal-binding</keyword>
<keyword id="KW-0964">Secreted</keyword>
<keyword id="KW-0800">Toxin</keyword>
<reference key="1">
    <citation type="journal article" date="2008" name="Toxicon">
        <title>Two coagulation factor X activators from Vipera a. ammodytes venom with potential to treat patients with dysfunctional factors IXa or VIIa.</title>
        <authorList>
            <person name="Leonardi A."/>
            <person name="Fox J.W."/>
            <person name="Trampus-Bakija A."/>
            <person name="Krizaj I."/>
        </authorList>
    </citation>
    <scope>PROTEIN SEQUENCE</scope>
    <source>
        <tissue>Venom</tissue>
    </source>
</reference>
<comment type="function">
    <text>Regulatory subunit of the blood coagulation factor X-activating enzyme. Activates coagulation factor X (F10) in a calcium-dependent manner by cleaving the Arg-Ile bond at position 234. Weakly hydrolyzes insulin B chain, fibrinogen and some components of the extracellular matrix in vitro, but does not activate prothrombin or plasminogen.</text>
</comment>
<comment type="subunit">
    <text>Heterotrimer; disulfide-linked. The heterotrimer consists of 1 heavy chain (a metalloproteinase) and 2 light chains: LC1 and LC2.</text>
</comment>
<comment type="subcellular location">
    <subcellularLocation>
        <location>Secreted</location>
    </subcellularLocation>
</comment>
<comment type="tissue specificity">
    <text>Expressed by the venom gland.</text>
</comment>
<comment type="PTM">
    <text evidence="1">N-glycosylated.</text>
</comment>
<comment type="miscellaneous">
    <text>Calcium is required for ligand binding.</text>
</comment>
<comment type="similarity">
    <text evidence="3">Belongs to the snaclec family.</text>
</comment>
<evidence type="ECO:0000250" key="1"/>
<evidence type="ECO:0000255" key="2">
    <source>
        <dbReference type="PROSITE-ProRule" id="PRU00040"/>
    </source>
</evidence>
<evidence type="ECO:0000305" key="3"/>
<feature type="chain" id="PRO_0000355313" description="Snaclec factor X-activator 1 light chain 2">
    <location>
        <begin position="1"/>
        <end position="11" status="greater than"/>
    </location>
</feature>
<feature type="domain" description="C-type lectin" evidence="2">
    <location>
        <begin position="10"/>
        <end position="11" status="greater than"/>
    </location>
</feature>
<feature type="non-terminal residue">
    <location>
        <position position="11"/>
    </location>
</feature>
<proteinExistence type="evidence at protein level"/>